<feature type="chain" id="PRO_0000405355" description="Tyrosine phosphatase-like protein J1">
    <location>
        <begin position="1"/>
        <end position="300"/>
    </location>
</feature>
<feature type="domain" description="Tyrosine-protein phosphatase" evidence="1">
    <location>
        <begin position="27"/>
        <end position="294"/>
    </location>
</feature>
<protein>
    <recommendedName>
        <fullName>Tyrosine phosphatase-like protein J1</fullName>
        <shortName>PTP-J1</shortName>
    </recommendedName>
</protein>
<dbReference type="EMBL" id="AY875686">
    <property type="protein sequence ID" value="AAW51795.1"/>
    <property type="molecule type" value="Genomic_DNA"/>
</dbReference>
<dbReference type="RefSeq" id="YP_239387.1">
    <property type="nucleotide sequence ID" value="NC_007036.1"/>
</dbReference>
<dbReference type="SMR" id="Q5I141"/>
<dbReference type="KEGG" id="vg:5075825"/>
<dbReference type="Proteomes" id="UP000008168">
    <property type="component" value="Genome"/>
</dbReference>
<dbReference type="GO" id="GO:0004725">
    <property type="term" value="F:protein tyrosine phosphatase activity"/>
    <property type="evidence" value="ECO:0007669"/>
    <property type="project" value="InterPro"/>
</dbReference>
<dbReference type="Gene3D" id="3.90.190.10">
    <property type="entry name" value="Protein tyrosine phosphatase superfamily"/>
    <property type="match status" value="1"/>
</dbReference>
<dbReference type="InterPro" id="IPR029021">
    <property type="entry name" value="Prot-tyrosine_phosphatase-like"/>
</dbReference>
<dbReference type="InterPro" id="IPR050348">
    <property type="entry name" value="Protein-Tyr_Phosphatase"/>
</dbReference>
<dbReference type="InterPro" id="IPR000242">
    <property type="entry name" value="PTP_cat"/>
</dbReference>
<dbReference type="InterPro" id="IPR003595">
    <property type="entry name" value="Tyr_Pase_cat"/>
</dbReference>
<dbReference type="InterPro" id="IPR000387">
    <property type="entry name" value="Tyr_Pase_dom"/>
</dbReference>
<dbReference type="PANTHER" id="PTHR19134">
    <property type="entry name" value="RECEPTOR-TYPE TYROSINE-PROTEIN PHOSPHATASE"/>
    <property type="match status" value="1"/>
</dbReference>
<dbReference type="PANTHER" id="PTHR19134:SF449">
    <property type="entry name" value="TYROSINE-PROTEIN PHOSPHATASE 1"/>
    <property type="match status" value="1"/>
</dbReference>
<dbReference type="Pfam" id="PF00102">
    <property type="entry name" value="Y_phosphatase"/>
    <property type="match status" value="1"/>
</dbReference>
<dbReference type="PRINTS" id="PR00700">
    <property type="entry name" value="PRTYPHPHTASE"/>
</dbReference>
<dbReference type="SMART" id="SM00194">
    <property type="entry name" value="PTPc"/>
    <property type="match status" value="1"/>
</dbReference>
<dbReference type="SMART" id="SM00404">
    <property type="entry name" value="PTPc_motif"/>
    <property type="match status" value="1"/>
</dbReference>
<dbReference type="SUPFAM" id="SSF52799">
    <property type="entry name" value="(Phosphotyrosine protein) phosphatases II"/>
    <property type="match status" value="1"/>
</dbReference>
<dbReference type="PROSITE" id="PS50056">
    <property type="entry name" value="TYR_PHOSPHATASE_2"/>
    <property type="match status" value="1"/>
</dbReference>
<dbReference type="PROSITE" id="PS50055">
    <property type="entry name" value="TYR_PHOSPHATASE_PTP"/>
    <property type="match status" value="1"/>
</dbReference>
<reference key="1">
    <citation type="journal article" date="2006" name="Virology">
        <title>Polydnavirus genomes reflect their dual roles as mutualists and pathogens.</title>
        <authorList>
            <person name="Webb B.A."/>
            <person name="Strand M.R."/>
            <person name="Dickey S.E."/>
            <person name="Beck M.H."/>
            <person name="Hilgarth R.S."/>
            <person name="Barney W.E."/>
            <person name="Kadash K."/>
            <person name="Kroemer J.A."/>
            <person name="Lindstrom K.G."/>
            <person name="Rattanadechakul W."/>
            <person name="Shelby K.S."/>
            <person name="Thoetkiattikul H."/>
            <person name="Turnbull M.W."/>
            <person name="Witherell R.A."/>
        </authorList>
    </citation>
    <scope>NUCLEOTIDE SEQUENCE [GENOMIC DNA]</scope>
</reference>
<comment type="similarity">
    <text evidence="2">Belongs to the protein-tyrosine phosphatase family.</text>
</comment>
<comment type="caution">
    <text evidence="2">PTP-J1 does not appear to be a functional PTP.</text>
</comment>
<name>PTPJ1_MDBVW</name>
<organismHost>
    <name type="scientific">Microplitis demolitor</name>
    <name type="common">Parasitoid wasp</name>
    <dbReference type="NCBI Taxonomy" id="69319"/>
</organismHost>
<proteinExistence type="inferred from homology"/>
<keyword id="KW-1185">Reference proteome</keyword>
<gene>
    <name type="primary">J1</name>
</gene>
<organism>
    <name type="scientific">Microplitis demolitor bracovirus (isolate Webb)</name>
    <name type="common">MdBV</name>
    <dbReference type="NCBI Taxonomy" id="654919"/>
    <lineage>
        <taxon>Viruses</taxon>
        <taxon>Viruses incertae sedis</taxon>
        <taxon>Polydnaviriformidae</taxon>
        <taxon>Bracoviriform</taxon>
        <taxon>Microplitis demolitor bracovirus</taxon>
    </lineage>
</organism>
<sequence>MGSHCSKNRSCRNYVTPTQKSNVREILKREHEHIMQGIVAFSCNISLENKNMKKNRYPDAPCFDYNRVVLPIRKGLDDYINASYVDGHNMKRRFICTQGPLEETALDFWQAVYQDRVRVIVMITKTYEDNKQKCYPYWMTHERSTVTYGELKIRTKKIKSFRNYKVTTLCLTNTNTGTVLDIKHFAYEDWPQGGVPSDVNNFLDFVLAVRHADSKTEVPISSESRVKESPILVHSSAGLDRAPAFCVIDICISKYSESAIIPLLTTVRDLRRQRNNCLSLSTQYIFCYFTVLQFVMSTPC</sequence>
<evidence type="ECO:0000255" key="1">
    <source>
        <dbReference type="PROSITE-ProRule" id="PRU00160"/>
    </source>
</evidence>
<evidence type="ECO:0000305" key="2"/>
<accession>Q5I141</accession>